<sequence>MMRALWTAASGMTAQQYNVDTIANNLSNVNTTGFKKIRAEFEDLIYQTHNRAGTPATENTLRPLGNQVGHGTKIAATQRIFEQGKMQSTNLLTDVAIEGDGFYKILLPDGTYAYTRDGSFKIDSNRELVTSQGYKVLPNILFPEEYIQNSITISEEGIVSVKIDTSNEPIELGQIEISRFINPAGLSAIGSNLFKETAGSGQEIAGIPGSEGMGRLRQGILEMSNVSIAEEMVTMIVAQRAYEINSKAIQTSDNMLGIANNLKRQ</sequence>
<gene>
    <name type="primary">flgG</name>
    <name type="ordered locus">BB_0774</name>
</gene>
<organism>
    <name type="scientific">Borreliella burgdorferi (strain ATCC 35210 / DSM 4680 / CIP 102532 / B31)</name>
    <name type="common">Borrelia burgdorferi</name>
    <dbReference type="NCBI Taxonomy" id="224326"/>
    <lineage>
        <taxon>Bacteria</taxon>
        <taxon>Pseudomonadati</taxon>
        <taxon>Spirochaetota</taxon>
        <taxon>Spirochaetia</taxon>
        <taxon>Spirochaetales</taxon>
        <taxon>Borreliaceae</taxon>
        <taxon>Borreliella</taxon>
    </lineage>
</organism>
<dbReference type="EMBL" id="AE000783">
    <property type="protein sequence ID" value="AAC67132.1"/>
    <property type="molecule type" value="Genomic_DNA"/>
</dbReference>
<dbReference type="PIR" id="E70196">
    <property type="entry name" value="E70196"/>
</dbReference>
<dbReference type="RefSeq" id="NP_212908.1">
    <property type="nucleotide sequence ID" value="NC_001318.1"/>
</dbReference>
<dbReference type="RefSeq" id="WP_002657111.1">
    <property type="nucleotide sequence ID" value="NC_001318.1"/>
</dbReference>
<dbReference type="SMR" id="O51715"/>
<dbReference type="STRING" id="224326.BB_0774"/>
<dbReference type="PaxDb" id="224326-BB_0774"/>
<dbReference type="EnsemblBacteria" id="AAC67132">
    <property type="protein sequence ID" value="AAC67132"/>
    <property type="gene ID" value="BB_0774"/>
</dbReference>
<dbReference type="GeneID" id="56567585"/>
<dbReference type="KEGG" id="bbu:BB_0774"/>
<dbReference type="PATRIC" id="fig|224326.49.peg.1166"/>
<dbReference type="HOGENOM" id="CLU_013687_0_1_12"/>
<dbReference type="OrthoDB" id="9804559at2"/>
<dbReference type="Proteomes" id="UP000001807">
    <property type="component" value="Chromosome"/>
</dbReference>
<dbReference type="GO" id="GO:0009426">
    <property type="term" value="C:bacterial-type flagellum basal body, distal rod"/>
    <property type="evidence" value="ECO:0007669"/>
    <property type="project" value="InterPro"/>
</dbReference>
<dbReference type="GO" id="GO:0071978">
    <property type="term" value="P:bacterial-type flagellum-dependent swarming motility"/>
    <property type="evidence" value="ECO:0007669"/>
    <property type="project" value="TreeGrafter"/>
</dbReference>
<dbReference type="InterPro" id="IPR001444">
    <property type="entry name" value="Flag_bb_rod_N"/>
</dbReference>
<dbReference type="InterPro" id="IPR019776">
    <property type="entry name" value="Flagellar_basal_body_rod_CS"/>
</dbReference>
<dbReference type="InterPro" id="IPR020013">
    <property type="entry name" value="Flagellar_FlgE/F/G"/>
</dbReference>
<dbReference type="InterPro" id="IPR010930">
    <property type="entry name" value="Flg_bb/hook_C_dom"/>
</dbReference>
<dbReference type="InterPro" id="IPR037925">
    <property type="entry name" value="FlgE/F/G-like"/>
</dbReference>
<dbReference type="InterPro" id="IPR012834">
    <property type="entry name" value="FlgG_G_neg"/>
</dbReference>
<dbReference type="InterPro" id="IPR053967">
    <property type="entry name" value="LlgE_F_G-like_D1"/>
</dbReference>
<dbReference type="NCBIfam" id="TIGR03506">
    <property type="entry name" value="FlgEFG_subfam"/>
    <property type="match status" value="2"/>
</dbReference>
<dbReference type="NCBIfam" id="TIGR02488">
    <property type="entry name" value="flgG_G_neg"/>
    <property type="match status" value="1"/>
</dbReference>
<dbReference type="NCBIfam" id="NF009456">
    <property type="entry name" value="PRK12816.1"/>
    <property type="match status" value="1"/>
</dbReference>
<dbReference type="PANTHER" id="PTHR30435:SF19">
    <property type="entry name" value="FLAGELLAR BASAL-BODY ROD PROTEIN FLGG"/>
    <property type="match status" value="1"/>
</dbReference>
<dbReference type="PANTHER" id="PTHR30435">
    <property type="entry name" value="FLAGELLAR PROTEIN"/>
    <property type="match status" value="1"/>
</dbReference>
<dbReference type="Pfam" id="PF00460">
    <property type="entry name" value="Flg_bb_rod"/>
    <property type="match status" value="1"/>
</dbReference>
<dbReference type="Pfam" id="PF06429">
    <property type="entry name" value="Flg_bbr_C"/>
    <property type="match status" value="1"/>
</dbReference>
<dbReference type="Pfam" id="PF22692">
    <property type="entry name" value="LlgE_F_G_D1"/>
    <property type="match status" value="1"/>
</dbReference>
<dbReference type="SUPFAM" id="SSF117143">
    <property type="entry name" value="Flagellar hook protein flgE"/>
    <property type="match status" value="1"/>
</dbReference>
<dbReference type="PROSITE" id="PS00588">
    <property type="entry name" value="FLAGELLA_BB_ROD"/>
    <property type="match status" value="1"/>
</dbReference>
<evidence type="ECO:0000250" key="1"/>
<evidence type="ECO:0000305" key="2"/>
<keyword id="KW-0975">Bacterial flagellum</keyword>
<keyword id="KW-1185">Reference proteome</keyword>
<comment type="subunit">
    <text evidence="1">The basal body constitutes a major portion of the flagellar organelle and consists of four rings (L,P,S, and M) mounted on a central rod. The rod consists of about 26 subunits of FlgG in the distal portion, and FlgB, FlgC and FlgF are thought to build up the proximal portion of the rod with about 6 subunits each (By similarity).</text>
</comment>
<comment type="subcellular location">
    <subcellularLocation>
        <location evidence="1">Bacterial flagellum basal body</location>
    </subcellularLocation>
</comment>
<comment type="similarity">
    <text evidence="2">Belongs to the flagella basal body rod proteins family.</text>
</comment>
<protein>
    <recommendedName>
        <fullName>Flagellar basal-body rod protein FlgG</fullName>
    </recommendedName>
    <alternativeName>
        <fullName>Distal rod protein</fullName>
    </alternativeName>
</protein>
<accession>O51715</accession>
<reference key="1">
    <citation type="journal article" date="1997" name="Nature">
        <title>Genomic sequence of a Lyme disease spirochaete, Borrelia burgdorferi.</title>
        <authorList>
            <person name="Fraser C.M."/>
            <person name="Casjens S."/>
            <person name="Huang W.M."/>
            <person name="Sutton G.G."/>
            <person name="Clayton R.A."/>
            <person name="Lathigra R."/>
            <person name="White O."/>
            <person name="Ketchum K.A."/>
            <person name="Dodson R.J."/>
            <person name="Hickey E.K."/>
            <person name="Gwinn M.L."/>
            <person name="Dougherty B.A."/>
            <person name="Tomb J.-F."/>
            <person name="Fleischmann R.D."/>
            <person name="Richardson D.L."/>
            <person name="Peterson J.D."/>
            <person name="Kerlavage A.R."/>
            <person name="Quackenbush J."/>
            <person name="Salzberg S.L."/>
            <person name="Hanson M."/>
            <person name="van Vugt R."/>
            <person name="Palmer N."/>
            <person name="Adams M.D."/>
            <person name="Gocayne J.D."/>
            <person name="Weidman J.F."/>
            <person name="Utterback T.R."/>
            <person name="Watthey L."/>
            <person name="McDonald L.A."/>
            <person name="Artiach P."/>
            <person name="Bowman C."/>
            <person name="Garland S.A."/>
            <person name="Fujii C."/>
            <person name="Cotton M.D."/>
            <person name="Horst K."/>
            <person name="Roberts K.M."/>
            <person name="Hatch B."/>
            <person name="Smith H.O."/>
            <person name="Venter J.C."/>
        </authorList>
    </citation>
    <scope>NUCLEOTIDE SEQUENCE [LARGE SCALE GENOMIC DNA]</scope>
    <source>
        <strain>ATCC 35210 / DSM 4680 / CIP 102532 / B31</strain>
    </source>
</reference>
<proteinExistence type="inferred from homology"/>
<feature type="chain" id="PRO_0000180844" description="Flagellar basal-body rod protein FlgG">
    <location>
        <begin position="1"/>
        <end position="265"/>
    </location>
</feature>
<name>FLGG_BORBU</name>